<evidence type="ECO:0000250" key="1"/>
<evidence type="ECO:0000255" key="2">
    <source>
        <dbReference type="HAMAP-Rule" id="MF_00062"/>
    </source>
</evidence>
<dbReference type="EC" id="2.7.7.4" evidence="2"/>
<dbReference type="EMBL" id="CP001154">
    <property type="protein sequence ID" value="ACO74680.1"/>
    <property type="molecule type" value="Genomic_DNA"/>
</dbReference>
<dbReference type="RefSeq" id="WP_012697166.1">
    <property type="nucleotide sequence ID" value="NC_012559.1"/>
</dbReference>
<dbReference type="SMR" id="C1D890"/>
<dbReference type="STRING" id="557598.LHK_01695"/>
<dbReference type="KEGG" id="lhk:LHK_01695"/>
<dbReference type="eggNOG" id="COG2895">
    <property type="taxonomic scope" value="Bacteria"/>
</dbReference>
<dbReference type="HOGENOM" id="CLU_007265_5_2_4"/>
<dbReference type="UniPathway" id="UPA00140">
    <property type="reaction ID" value="UER00204"/>
</dbReference>
<dbReference type="Proteomes" id="UP000002010">
    <property type="component" value="Chromosome"/>
</dbReference>
<dbReference type="GO" id="GO:0005524">
    <property type="term" value="F:ATP binding"/>
    <property type="evidence" value="ECO:0007669"/>
    <property type="project" value="UniProtKB-KW"/>
</dbReference>
<dbReference type="GO" id="GO:0005525">
    <property type="term" value="F:GTP binding"/>
    <property type="evidence" value="ECO:0007669"/>
    <property type="project" value="UniProtKB-UniRule"/>
</dbReference>
<dbReference type="GO" id="GO:0003924">
    <property type="term" value="F:GTPase activity"/>
    <property type="evidence" value="ECO:0007669"/>
    <property type="project" value="InterPro"/>
</dbReference>
<dbReference type="GO" id="GO:0004781">
    <property type="term" value="F:sulfate adenylyltransferase (ATP) activity"/>
    <property type="evidence" value="ECO:0007669"/>
    <property type="project" value="UniProtKB-UniRule"/>
</dbReference>
<dbReference type="GO" id="GO:0070814">
    <property type="term" value="P:hydrogen sulfide biosynthetic process"/>
    <property type="evidence" value="ECO:0007669"/>
    <property type="project" value="UniProtKB-UniRule"/>
</dbReference>
<dbReference type="GO" id="GO:0000103">
    <property type="term" value="P:sulfate assimilation"/>
    <property type="evidence" value="ECO:0007669"/>
    <property type="project" value="UniProtKB-UniRule"/>
</dbReference>
<dbReference type="CDD" id="cd04166">
    <property type="entry name" value="CysN_ATPS"/>
    <property type="match status" value="1"/>
</dbReference>
<dbReference type="CDD" id="cd03695">
    <property type="entry name" value="CysN_NodQ_II"/>
    <property type="match status" value="1"/>
</dbReference>
<dbReference type="CDD" id="cd04095">
    <property type="entry name" value="CysN_NoDQ_III"/>
    <property type="match status" value="1"/>
</dbReference>
<dbReference type="FunFam" id="2.40.30.10:FF:000027">
    <property type="entry name" value="Sulfate adenylyltransferase subunit 1"/>
    <property type="match status" value="1"/>
</dbReference>
<dbReference type="FunFam" id="3.40.50.300:FF:000119">
    <property type="entry name" value="Sulfate adenylyltransferase subunit 1"/>
    <property type="match status" value="1"/>
</dbReference>
<dbReference type="Gene3D" id="3.40.50.300">
    <property type="entry name" value="P-loop containing nucleotide triphosphate hydrolases"/>
    <property type="match status" value="1"/>
</dbReference>
<dbReference type="Gene3D" id="2.40.30.10">
    <property type="entry name" value="Translation factors"/>
    <property type="match status" value="2"/>
</dbReference>
<dbReference type="HAMAP" id="MF_00062">
    <property type="entry name" value="Sulf_adenylyltr_sub1"/>
    <property type="match status" value="1"/>
</dbReference>
<dbReference type="InterPro" id="IPR041757">
    <property type="entry name" value="CysN_GTP-bd"/>
</dbReference>
<dbReference type="InterPro" id="IPR044138">
    <property type="entry name" value="CysN_II"/>
</dbReference>
<dbReference type="InterPro" id="IPR044139">
    <property type="entry name" value="CysN_NoDQ_III"/>
</dbReference>
<dbReference type="InterPro" id="IPR031157">
    <property type="entry name" value="G_TR_CS"/>
</dbReference>
<dbReference type="InterPro" id="IPR054696">
    <property type="entry name" value="GTP-eEF1A_C"/>
</dbReference>
<dbReference type="InterPro" id="IPR027417">
    <property type="entry name" value="P-loop_NTPase"/>
</dbReference>
<dbReference type="InterPro" id="IPR011779">
    <property type="entry name" value="SO4_adenylTrfase_lsu"/>
</dbReference>
<dbReference type="InterPro" id="IPR000795">
    <property type="entry name" value="T_Tr_GTP-bd_dom"/>
</dbReference>
<dbReference type="InterPro" id="IPR050100">
    <property type="entry name" value="TRAFAC_GTPase_members"/>
</dbReference>
<dbReference type="InterPro" id="IPR009000">
    <property type="entry name" value="Transl_B-barrel_sf"/>
</dbReference>
<dbReference type="InterPro" id="IPR009001">
    <property type="entry name" value="Transl_elong_EF1A/Init_IF2_C"/>
</dbReference>
<dbReference type="NCBIfam" id="TIGR02034">
    <property type="entry name" value="CysN"/>
    <property type="match status" value="1"/>
</dbReference>
<dbReference type="NCBIfam" id="NF003478">
    <property type="entry name" value="PRK05124.1"/>
    <property type="match status" value="1"/>
</dbReference>
<dbReference type="NCBIfam" id="NF004035">
    <property type="entry name" value="PRK05506.1"/>
    <property type="match status" value="1"/>
</dbReference>
<dbReference type="PANTHER" id="PTHR23115">
    <property type="entry name" value="TRANSLATION FACTOR"/>
    <property type="match status" value="1"/>
</dbReference>
<dbReference type="Pfam" id="PF22594">
    <property type="entry name" value="GTP-eEF1A_C"/>
    <property type="match status" value="1"/>
</dbReference>
<dbReference type="Pfam" id="PF00009">
    <property type="entry name" value="GTP_EFTU"/>
    <property type="match status" value="1"/>
</dbReference>
<dbReference type="PRINTS" id="PR00315">
    <property type="entry name" value="ELONGATNFCT"/>
</dbReference>
<dbReference type="SUPFAM" id="SSF50465">
    <property type="entry name" value="EF-Tu/eEF-1alpha/eIF2-gamma C-terminal domain"/>
    <property type="match status" value="1"/>
</dbReference>
<dbReference type="SUPFAM" id="SSF52540">
    <property type="entry name" value="P-loop containing nucleoside triphosphate hydrolases"/>
    <property type="match status" value="1"/>
</dbReference>
<dbReference type="SUPFAM" id="SSF50447">
    <property type="entry name" value="Translation proteins"/>
    <property type="match status" value="1"/>
</dbReference>
<dbReference type="PROSITE" id="PS00301">
    <property type="entry name" value="G_TR_1"/>
    <property type="match status" value="1"/>
</dbReference>
<dbReference type="PROSITE" id="PS51722">
    <property type="entry name" value="G_TR_2"/>
    <property type="match status" value="1"/>
</dbReference>
<accession>C1D890</accession>
<gene>
    <name evidence="2" type="primary">cysN</name>
    <name type="ordered locus">LHK_01695</name>
</gene>
<comment type="function">
    <text evidence="2">With CysD forms the ATP sulfurylase (ATPS) that catalyzes the adenylation of sulfate producing adenosine 5'-phosphosulfate (APS) and diphosphate, the first enzymatic step in sulfur assimilation pathway. APS synthesis involves the formation of a high-energy phosphoric-sulfuric acid anhydride bond driven by GTP hydrolysis by CysN coupled to ATP hydrolysis by CysD.</text>
</comment>
<comment type="catalytic activity">
    <reaction evidence="2">
        <text>sulfate + ATP + H(+) = adenosine 5'-phosphosulfate + diphosphate</text>
        <dbReference type="Rhea" id="RHEA:18133"/>
        <dbReference type="ChEBI" id="CHEBI:15378"/>
        <dbReference type="ChEBI" id="CHEBI:16189"/>
        <dbReference type="ChEBI" id="CHEBI:30616"/>
        <dbReference type="ChEBI" id="CHEBI:33019"/>
        <dbReference type="ChEBI" id="CHEBI:58243"/>
        <dbReference type="EC" id="2.7.7.4"/>
    </reaction>
</comment>
<comment type="pathway">
    <text evidence="2">Sulfur metabolism; hydrogen sulfide biosynthesis; sulfite from sulfate: step 1/3.</text>
</comment>
<comment type="subunit">
    <text evidence="2">Heterodimer composed of CysD, the smaller subunit, and CysN.</text>
</comment>
<comment type="similarity">
    <text evidence="2">Belongs to the TRAFAC class translation factor GTPase superfamily. Classic translation factor GTPase family. CysN/NodQ subfamily.</text>
</comment>
<reference key="1">
    <citation type="journal article" date="2009" name="PLoS Genet.">
        <title>The complete genome and proteome of Laribacter hongkongensis reveal potential mechanisms for adaptations to different temperatures and habitats.</title>
        <authorList>
            <person name="Woo P.C.Y."/>
            <person name="Lau S.K.P."/>
            <person name="Tse H."/>
            <person name="Teng J.L.L."/>
            <person name="Curreem S.O."/>
            <person name="Tsang A.K.L."/>
            <person name="Fan R.Y.Y."/>
            <person name="Wong G.K.M."/>
            <person name="Huang Y."/>
            <person name="Loman N.J."/>
            <person name="Snyder L.A.S."/>
            <person name="Cai J.J."/>
            <person name="Huang J.-D."/>
            <person name="Mak W."/>
            <person name="Pallen M.J."/>
            <person name="Lok S."/>
            <person name="Yuen K.-Y."/>
        </authorList>
    </citation>
    <scope>NUCLEOTIDE SEQUENCE [LARGE SCALE GENOMIC DNA]</scope>
    <source>
        <strain>HLHK9</strain>
    </source>
</reference>
<protein>
    <recommendedName>
        <fullName evidence="2">Sulfate adenylyltransferase subunit 1</fullName>
        <ecNumber evidence="2">2.7.7.4</ecNumber>
    </recommendedName>
    <alternativeName>
        <fullName evidence="2">ATP-sulfurylase large subunit</fullName>
    </alternativeName>
    <alternativeName>
        <fullName evidence="2">Sulfate adenylate transferase</fullName>
        <shortName evidence="2">SAT</shortName>
    </alternativeName>
</protein>
<proteinExistence type="inferred from homology"/>
<name>CYSN_LARHH</name>
<keyword id="KW-0067">ATP-binding</keyword>
<keyword id="KW-0342">GTP-binding</keyword>
<keyword id="KW-0547">Nucleotide-binding</keyword>
<keyword id="KW-0548">Nucleotidyltransferase</keyword>
<keyword id="KW-1185">Reference proteome</keyword>
<keyword id="KW-0808">Transferase</keyword>
<organism>
    <name type="scientific">Laribacter hongkongensis (strain HLHK9)</name>
    <dbReference type="NCBI Taxonomy" id="557598"/>
    <lineage>
        <taxon>Bacteria</taxon>
        <taxon>Pseudomonadati</taxon>
        <taxon>Pseudomonadota</taxon>
        <taxon>Betaproteobacteria</taxon>
        <taxon>Neisseriales</taxon>
        <taxon>Aquaspirillaceae</taxon>
        <taxon>Laribacter</taxon>
    </lineage>
</organism>
<sequence>MTHQSDLIAEDIHAYLARHETKDLLRFITCGSVDDGKSTLIGRLLHDSRLIFEDQLAAIERDSQKHNTTDEAVDLALLVDGLQAEREQGITIDVAYRYFSTDTRKFIIADCPGHEQYTRNMATGASTADLAIILIDARYGVQTQTRRHSFIASLLGIRHVIVAVNKMDLLEFDQAVFERIRQDYLTFAKALDIHDIRFVPLSALRGDNVVSPSERMPWYDGPSLMQLLDSIRLDADQALQAFRLPVQYVNRPNLDFRGFCGTIAAGVIRPGDQVTVLPSGRQSRVRAIVTTDGELPVAATGQAVTLTLEDEIDISRGDMIVRHGEPLPLVADRLTVELVWMHDAPLQTGRAYWVKLAGKWLPGRVTAVHHRVNVNTMEREAASSLALNEIAEVTLEIDAPMAVDAYRQCRATGSLILVDRISNATLGAGMIRSAEPSAGIQSEKDAARRWQAFEIEFNELVRRHFPHWQARDMRDWPGHKE</sequence>
<feature type="chain" id="PRO_1000117915" description="Sulfate adenylyltransferase subunit 1">
    <location>
        <begin position="1"/>
        <end position="481"/>
    </location>
</feature>
<feature type="domain" description="tr-type G">
    <location>
        <begin position="22"/>
        <end position="236"/>
    </location>
</feature>
<feature type="region of interest" description="G1" evidence="1">
    <location>
        <begin position="31"/>
        <end position="38"/>
    </location>
</feature>
<feature type="region of interest" description="G2" evidence="1">
    <location>
        <begin position="89"/>
        <end position="93"/>
    </location>
</feature>
<feature type="region of interest" description="G3" evidence="1">
    <location>
        <begin position="110"/>
        <end position="113"/>
    </location>
</feature>
<feature type="region of interest" description="G4" evidence="1">
    <location>
        <begin position="165"/>
        <end position="168"/>
    </location>
</feature>
<feature type="region of interest" description="G5" evidence="1">
    <location>
        <begin position="202"/>
        <end position="204"/>
    </location>
</feature>
<feature type="binding site" evidence="2">
    <location>
        <begin position="31"/>
        <end position="38"/>
    </location>
    <ligand>
        <name>GTP</name>
        <dbReference type="ChEBI" id="CHEBI:37565"/>
    </ligand>
</feature>
<feature type="binding site" evidence="2">
    <location>
        <begin position="110"/>
        <end position="114"/>
    </location>
    <ligand>
        <name>GTP</name>
        <dbReference type="ChEBI" id="CHEBI:37565"/>
    </ligand>
</feature>
<feature type="binding site" evidence="2">
    <location>
        <begin position="165"/>
        <end position="168"/>
    </location>
    <ligand>
        <name>GTP</name>
        <dbReference type="ChEBI" id="CHEBI:37565"/>
    </ligand>
</feature>